<reference key="1">
    <citation type="journal article" date="2004" name="Genome Res.">
        <title>The status, quality, and expansion of the NIH full-length cDNA project: the Mammalian Gene Collection (MGC).</title>
        <authorList>
            <consortium name="The MGC Project Team"/>
        </authorList>
    </citation>
    <scope>NUCLEOTIDE SEQUENCE [LARGE SCALE MRNA]</scope>
    <source>
        <tissue>Liver</tissue>
    </source>
</reference>
<proteinExistence type="evidence at transcript level"/>
<protein>
    <recommendedName>
        <fullName>NudC domain-containing protein 2</fullName>
    </recommendedName>
</protein>
<sequence length="157" mass="17674">MSAPFEERSGVVPCATPWGQWYQTLEEVFIEVQVPPGTRAQDIQCGLQSRHVALAVGGREILKGKLFDSTIADEGTWTLEDRKMVRIVLTKTKRDAANCWTSLLESEYAADPWVQDQMQRKLTLERFQKENPGFDFSGAEISGNYTKGGPDFSNLEK</sequence>
<gene>
    <name type="primary">Nudcd2</name>
</gene>
<comment type="function">
    <text evidence="1">May regulate the LIS1/dynein pathway by stabilizing LIS1 with Hsp90 chaperone.</text>
</comment>
<comment type="subunit">
    <text evidence="1">Interacts with LIS1.</text>
</comment>
<comment type="subcellular location">
    <subcellularLocation>
        <location evidence="1">Chromosome</location>
        <location evidence="1">Centromere</location>
        <location evidence="1">Kinetochore</location>
    </subcellularLocation>
    <subcellularLocation>
        <location evidence="1">Cytoplasm</location>
        <location evidence="1">Cytoskeleton</location>
        <location evidence="1">Microtubule organizing center</location>
        <location evidence="1">Centrosome</location>
    </subcellularLocation>
    <subcellularLocation>
        <location evidence="1">Cytoplasm</location>
        <location evidence="1">Cytoskeleton</location>
        <location evidence="1">Spindle pole</location>
    </subcellularLocation>
    <text evidence="1">Associates with centrosomes in interphase and to spindle poles and kinetochores during mitosis.</text>
</comment>
<organism>
    <name type="scientific">Rattus norvegicus</name>
    <name type="common">Rat</name>
    <dbReference type="NCBI Taxonomy" id="10116"/>
    <lineage>
        <taxon>Eukaryota</taxon>
        <taxon>Metazoa</taxon>
        <taxon>Chordata</taxon>
        <taxon>Craniata</taxon>
        <taxon>Vertebrata</taxon>
        <taxon>Euteleostomi</taxon>
        <taxon>Mammalia</taxon>
        <taxon>Eutheria</taxon>
        <taxon>Euarchontoglires</taxon>
        <taxon>Glires</taxon>
        <taxon>Rodentia</taxon>
        <taxon>Myomorpha</taxon>
        <taxon>Muroidea</taxon>
        <taxon>Muridae</taxon>
        <taxon>Murinae</taxon>
        <taxon>Rattus</taxon>
    </lineage>
</organism>
<dbReference type="EMBL" id="BC088299">
    <property type="protein sequence ID" value="AAH88299.1"/>
    <property type="molecule type" value="mRNA"/>
</dbReference>
<dbReference type="RefSeq" id="NP_001009621.1">
    <property type="nucleotide sequence ID" value="NM_001009621.2"/>
</dbReference>
<dbReference type="SMR" id="Q5M823"/>
<dbReference type="FunCoup" id="Q5M823">
    <property type="interactions" value="3032"/>
</dbReference>
<dbReference type="STRING" id="10116.ENSRNOP00000069725"/>
<dbReference type="PhosphoSitePlus" id="Q5M823"/>
<dbReference type="jPOST" id="Q5M823"/>
<dbReference type="PaxDb" id="10116-ENSRNOP00000004339"/>
<dbReference type="Ensembl" id="ENSRNOT00000111631.1">
    <property type="protein sequence ID" value="ENSRNOP00000077894.1"/>
    <property type="gene ID" value="ENSRNOG00000060914.2"/>
</dbReference>
<dbReference type="GeneID" id="287199"/>
<dbReference type="KEGG" id="rno:287199"/>
<dbReference type="UCSC" id="RGD:1307203">
    <property type="organism name" value="rat"/>
</dbReference>
<dbReference type="AGR" id="RGD:1307203"/>
<dbReference type="CTD" id="134492"/>
<dbReference type="RGD" id="1307203">
    <property type="gene designation" value="Nudcd2"/>
</dbReference>
<dbReference type="eggNOG" id="KOG2265">
    <property type="taxonomic scope" value="Eukaryota"/>
</dbReference>
<dbReference type="GeneTree" id="ENSGT00390000001644"/>
<dbReference type="HOGENOM" id="CLU_113495_1_0_1"/>
<dbReference type="InParanoid" id="Q5M823"/>
<dbReference type="OMA" id="RDVECSL"/>
<dbReference type="OrthoDB" id="515366at2759"/>
<dbReference type="PhylomeDB" id="Q5M823"/>
<dbReference type="TreeFam" id="TF332391"/>
<dbReference type="PRO" id="PR:Q5M823"/>
<dbReference type="Proteomes" id="UP000002494">
    <property type="component" value="Chromosome 10"/>
</dbReference>
<dbReference type="Bgee" id="ENSRNOG00000060914">
    <property type="expression patterns" value="Expressed in thymus and 19 other cell types or tissues"/>
</dbReference>
<dbReference type="GO" id="GO:0005813">
    <property type="term" value="C:centrosome"/>
    <property type="evidence" value="ECO:0007669"/>
    <property type="project" value="UniProtKB-SubCell"/>
</dbReference>
<dbReference type="GO" id="GO:0005737">
    <property type="term" value="C:cytoplasm"/>
    <property type="evidence" value="ECO:0000318"/>
    <property type="project" value="GO_Central"/>
</dbReference>
<dbReference type="GO" id="GO:0000776">
    <property type="term" value="C:kinetochore"/>
    <property type="evidence" value="ECO:0007669"/>
    <property type="project" value="UniProtKB-KW"/>
</dbReference>
<dbReference type="GO" id="GO:0000922">
    <property type="term" value="C:spindle pole"/>
    <property type="evidence" value="ECO:0007669"/>
    <property type="project" value="UniProtKB-SubCell"/>
</dbReference>
<dbReference type="GO" id="GO:0051082">
    <property type="term" value="F:unfolded protein binding"/>
    <property type="evidence" value="ECO:0000318"/>
    <property type="project" value="GO_Central"/>
</dbReference>
<dbReference type="GO" id="GO:0006457">
    <property type="term" value="P:protein folding"/>
    <property type="evidence" value="ECO:0000318"/>
    <property type="project" value="GO_Central"/>
</dbReference>
<dbReference type="CDD" id="cd06494">
    <property type="entry name" value="p23_NUDCD2_like"/>
    <property type="match status" value="1"/>
</dbReference>
<dbReference type="FunFam" id="1.20.5.740:FF:000001">
    <property type="entry name" value="nudC domain-containing protein 2"/>
    <property type="match status" value="1"/>
</dbReference>
<dbReference type="FunFam" id="2.60.40.790:FF:000021">
    <property type="entry name" value="nudC domain-containing protein 2"/>
    <property type="match status" value="1"/>
</dbReference>
<dbReference type="Gene3D" id="2.60.40.790">
    <property type="match status" value="1"/>
</dbReference>
<dbReference type="Gene3D" id="1.20.5.740">
    <property type="entry name" value="Single helix bin"/>
    <property type="match status" value="1"/>
</dbReference>
<dbReference type="InterPro" id="IPR007052">
    <property type="entry name" value="CS_dom"/>
</dbReference>
<dbReference type="InterPro" id="IPR008978">
    <property type="entry name" value="HSP20-like_chaperone"/>
</dbReference>
<dbReference type="InterPro" id="IPR037898">
    <property type="entry name" value="NudC_fam"/>
</dbReference>
<dbReference type="InterPro" id="IPR037902">
    <property type="entry name" value="p23_NUDCD2"/>
</dbReference>
<dbReference type="PANTHER" id="PTHR12356">
    <property type="entry name" value="NUCLEAR MOVEMENT PROTEIN NUDC"/>
    <property type="match status" value="1"/>
</dbReference>
<dbReference type="PANTHER" id="PTHR12356:SF18">
    <property type="entry name" value="NUDC DOMAIN-CONTAINING PROTEIN 2"/>
    <property type="match status" value="1"/>
</dbReference>
<dbReference type="Pfam" id="PF04969">
    <property type="entry name" value="CS"/>
    <property type="match status" value="1"/>
</dbReference>
<dbReference type="SUPFAM" id="SSF49764">
    <property type="entry name" value="HSP20-like chaperones"/>
    <property type="match status" value="1"/>
</dbReference>
<dbReference type="PROSITE" id="PS51203">
    <property type="entry name" value="CS"/>
    <property type="match status" value="1"/>
</dbReference>
<accession>Q5M823</accession>
<evidence type="ECO:0000250" key="1"/>
<evidence type="ECO:0000250" key="2">
    <source>
        <dbReference type="UniProtKB" id="Q8WVJ2"/>
    </source>
</evidence>
<evidence type="ECO:0000250" key="3">
    <source>
        <dbReference type="UniProtKB" id="Q9CQ48"/>
    </source>
</evidence>
<evidence type="ECO:0000255" key="4">
    <source>
        <dbReference type="PROSITE-ProRule" id="PRU00547"/>
    </source>
</evidence>
<evidence type="ECO:0000256" key="5">
    <source>
        <dbReference type="SAM" id="MobiDB-lite"/>
    </source>
</evidence>
<name>NUDC2_RAT</name>
<keyword id="KW-0007">Acetylation</keyword>
<keyword id="KW-0137">Centromere</keyword>
<keyword id="KW-0158">Chromosome</keyword>
<keyword id="KW-0963">Cytoplasm</keyword>
<keyword id="KW-0206">Cytoskeleton</keyword>
<keyword id="KW-0995">Kinetochore</keyword>
<keyword id="KW-0597">Phosphoprotein</keyword>
<keyword id="KW-1185">Reference proteome</keyword>
<feature type="initiator methionine" description="Removed" evidence="2">
    <location>
        <position position="1"/>
    </location>
</feature>
<feature type="chain" id="PRO_0000057984" description="NudC domain-containing protein 2">
    <location>
        <begin position="2"/>
        <end position="157"/>
    </location>
</feature>
<feature type="domain" description="CS" evidence="4">
    <location>
        <begin position="14"/>
        <end position="104"/>
    </location>
</feature>
<feature type="region of interest" description="Disordered" evidence="5">
    <location>
        <begin position="134"/>
        <end position="157"/>
    </location>
</feature>
<feature type="modified residue" description="N-acetylserine" evidence="2">
    <location>
        <position position="2"/>
    </location>
</feature>
<feature type="modified residue" description="Phosphoserine" evidence="2">
    <location>
        <position position="142"/>
    </location>
</feature>
<feature type="modified residue" description="Phosphotyrosine" evidence="3">
    <location>
        <position position="145"/>
    </location>
</feature>